<name>YBEL_ECOL6</name>
<dbReference type="EMBL" id="AE014075">
    <property type="protein sequence ID" value="AAN79207.1"/>
    <property type="molecule type" value="Genomic_DNA"/>
</dbReference>
<dbReference type="RefSeq" id="WP_001044880.1">
    <property type="nucleotide sequence ID" value="NZ_CP051263.1"/>
</dbReference>
<dbReference type="STRING" id="199310.c0734"/>
<dbReference type="KEGG" id="ecc:c0734"/>
<dbReference type="eggNOG" id="COG2888">
    <property type="taxonomic scope" value="Bacteria"/>
</dbReference>
<dbReference type="HOGENOM" id="CLU_101353_1_0_6"/>
<dbReference type="BioCyc" id="ECOL199310:C0734-MONOMER"/>
<dbReference type="Proteomes" id="UP000001410">
    <property type="component" value="Chromosome"/>
</dbReference>
<dbReference type="InterPro" id="IPR009912">
    <property type="entry name" value="DUF1451"/>
</dbReference>
<dbReference type="NCBIfam" id="NF008261">
    <property type="entry name" value="PRK11032.1"/>
    <property type="match status" value="1"/>
</dbReference>
<dbReference type="Pfam" id="PF07295">
    <property type="entry name" value="DUF1451"/>
    <property type="match status" value="1"/>
</dbReference>
<accession>P0AAU0</accession>
<accession>P46129</accession>
<accession>P77654</accession>
<reference key="1">
    <citation type="journal article" date="2002" name="Proc. Natl. Acad. Sci. U.S.A.">
        <title>Extensive mosaic structure revealed by the complete genome sequence of uropathogenic Escherichia coli.</title>
        <authorList>
            <person name="Welch R.A."/>
            <person name="Burland V."/>
            <person name="Plunkett G. III"/>
            <person name="Redford P."/>
            <person name="Roesch P."/>
            <person name="Rasko D."/>
            <person name="Buckles E.L."/>
            <person name="Liou S.-R."/>
            <person name="Boutin A."/>
            <person name="Hackett J."/>
            <person name="Stroud D."/>
            <person name="Mayhew G.F."/>
            <person name="Rose D.J."/>
            <person name="Zhou S."/>
            <person name="Schwartz D.C."/>
            <person name="Perna N.T."/>
            <person name="Mobley H.L.T."/>
            <person name="Donnenberg M.S."/>
            <person name="Blattner F.R."/>
        </authorList>
    </citation>
    <scope>NUCLEOTIDE SEQUENCE [LARGE SCALE GENOMIC DNA]</scope>
    <source>
        <strain>CFT073 / ATCC 700928 / UPEC</strain>
    </source>
</reference>
<gene>
    <name type="primary">ybeL</name>
    <name type="ordered locus">c0734</name>
</gene>
<organism>
    <name type="scientific">Escherichia coli O6:H1 (strain CFT073 / ATCC 700928 / UPEC)</name>
    <dbReference type="NCBI Taxonomy" id="199310"/>
    <lineage>
        <taxon>Bacteria</taxon>
        <taxon>Pseudomonadati</taxon>
        <taxon>Pseudomonadota</taxon>
        <taxon>Gammaproteobacteria</taxon>
        <taxon>Enterobacterales</taxon>
        <taxon>Enterobacteriaceae</taxon>
        <taxon>Escherichia</taxon>
    </lineage>
</organism>
<proteinExistence type="predicted"/>
<keyword id="KW-1185">Reference proteome</keyword>
<sequence length="160" mass="18797">MNKVAQYYRELVASLSERLRNGERDIDALVEQARERVIKTGELTRTEVDELTRAVRRDLEEFAMSYEESLKEESDSVFMRVIKESLWQELADITDKTQLEWREVFQDLNHHGVYHSGEVVGLGNLVCEKCHFHLPIYTPEVLTLCPKCGHDQFQRRPFEP</sequence>
<protein>
    <recommendedName>
        <fullName>Uncharacterized protein YbeL</fullName>
    </recommendedName>
</protein>
<feature type="chain" id="PRO_0000168680" description="Uncharacterized protein YbeL">
    <location>
        <begin position="1"/>
        <end position="160"/>
    </location>
</feature>